<reference key="1">
    <citation type="journal article" date="2003" name="Proc. Natl. Acad. Sci. U.S.A.">
        <title>Complete genome sequence of the Q-fever pathogen, Coxiella burnetii.</title>
        <authorList>
            <person name="Seshadri R."/>
            <person name="Paulsen I.T."/>
            <person name="Eisen J.A."/>
            <person name="Read T.D."/>
            <person name="Nelson K.E."/>
            <person name="Nelson W.C."/>
            <person name="Ward N.L."/>
            <person name="Tettelin H."/>
            <person name="Davidsen T.M."/>
            <person name="Beanan M.J."/>
            <person name="DeBoy R.T."/>
            <person name="Daugherty S.C."/>
            <person name="Brinkac L.M."/>
            <person name="Madupu R."/>
            <person name="Dodson R.J."/>
            <person name="Khouri H.M."/>
            <person name="Lee K.H."/>
            <person name="Carty H.A."/>
            <person name="Scanlan D."/>
            <person name="Heinzen R.A."/>
            <person name="Thompson H.A."/>
            <person name="Samuel J.E."/>
            <person name="Fraser C.M."/>
            <person name="Heidelberg J.F."/>
        </authorList>
    </citation>
    <scope>NUCLEOTIDE SEQUENCE [LARGE SCALE GENOMIC DNA]</scope>
    <source>
        <strain>RSA 493 / Nine Mile phase I</strain>
    </source>
</reference>
<evidence type="ECO:0000255" key="1">
    <source>
        <dbReference type="HAMAP-Rule" id="MF_00156"/>
    </source>
</evidence>
<organism>
    <name type="scientific">Coxiella burnetii (strain RSA 493 / Nine Mile phase I)</name>
    <dbReference type="NCBI Taxonomy" id="227377"/>
    <lineage>
        <taxon>Bacteria</taxon>
        <taxon>Pseudomonadati</taxon>
        <taxon>Pseudomonadota</taxon>
        <taxon>Gammaproteobacteria</taxon>
        <taxon>Legionellales</taxon>
        <taxon>Coxiellaceae</taxon>
        <taxon>Coxiella</taxon>
    </lineage>
</organism>
<feature type="chain" id="PRO_0000297253" description="3-methyl-2-oxobutanoate hydroxymethyltransferase">
    <location>
        <begin position="1"/>
        <end position="266"/>
    </location>
</feature>
<feature type="active site" description="Proton acceptor" evidence="1">
    <location>
        <position position="183"/>
    </location>
</feature>
<feature type="binding site" evidence="1">
    <location>
        <begin position="45"/>
        <end position="46"/>
    </location>
    <ligand>
        <name>3-methyl-2-oxobutanoate</name>
        <dbReference type="ChEBI" id="CHEBI:11851"/>
    </ligand>
</feature>
<feature type="binding site" evidence="1">
    <location>
        <position position="45"/>
    </location>
    <ligand>
        <name>Mg(2+)</name>
        <dbReference type="ChEBI" id="CHEBI:18420"/>
    </ligand>
</feature>
<feature type="binding site" evidence="1">
    <location>
        <position position="84"/>
    </location>
    <ligand>
        <name>3-methyl-2-oxobutanoate</name>
        <dbReference type="ChEBI" id="CHEBI:11851"/>
    </ligand>
</feature>
<feature type="binding site" evidence="1">
    <location>
        <position position="84"/>
    </location>
    <ligand>
        <name>Mg(2+)</name>
        <dbReference type="ChEBI" id="CHEBI:18420"/>
    </ligand>
</feature>
<feature type="binding site" evidence="1">
    <location>
        <position position="113"/>
    </location>
    <ligand>
        <name>3-methyl-2-oxobutanoate</name>
        <dbReference type="ChEBI" id="CHEBI:11851"/>
    </ligand>
</feature>
<feature type="binding site" evidence="1">
    <location>
        <position position="115"/>
    </location>
    <ligand>
        <name>Mg(2+)</name>
        <dbReference type="ChEBI" id="CHEBI:18420"/>
    </ligand>
</feature>
<accession>Q83EA2</accession>
<comment type="function">
    <text evidence="1">Catalyzes the reversible reaction in which hydroxymethyl group from 5,10-methylenetetrahydrofolate is transferred onto alpha-ketoisovalerate to form ketopantoate.</text>
</comment>
<comment type="catalytic activity">
    <reaction evidence="1">
        <text>3-methyl-2-oxobutanoate + (6R)-5,10-methylene-5,6,7,8-tetrahydrofolate + H2O = 2-dehydropantoate + (6S)-5,6,7,8-tetrahydrofolate</text>
        <dbReference type="Rhea" id="RHEA:11824"/>
        <dbReference type="ChEBI" id="CHEBI:11561"/>
        <dbReference type="ChEBI" id="CHEBI:11851"/>
        <dbReference type="ChEBI" id="CHEBI:15377"/>
        <dbReference type="ChEBI" id="CHEBI:15636"/>
        <dbReference type="ChEBI" id="CHEBI:57453"/>
        <dbReference type="EC" id="2.1.2.11"/>
    </reaction>
</comment>
<comment type="cofactor">
    <cofactor evidence="1">
        <name>Mg(2+)</name>
        <dbReference type="ChEBI" id="CHEBI:18420"/>
    </cofactor>
    <text evidence="1">Binds 1 Mg(2+) ion per subunit.</text>
</comment>
<comment type="pathway">
    <text evidence="1">Cofactor biosynthesis; (R)-pantothenate biosynthesis; (R)-pantoate from 3-methyl-2-oxobutanoate: step 1/2.</text>
</comment>
<comment type="subunit">
    <text evidence="1">Homodecamer; pentamer of dimers.</text>
</comment>
<comment type="subcellular location">
    <subcellularLocation>
        <location evidence="1">Cytoplasm</location>
    </subcellularLocation>
</comment>
<comment type="similarity">
    <text evidence="1">Belongs to the PanB family.</text>
</comment>
<keyword id="KW-0963">Cytoplasm</keyword>
<keyword id="KW-0460">Magnesium</keyword>
<keyword id="KW-0479">Metal-binding</keyword>
<keyword id="KW-0566">Pantothenate biosynthesis</keyword>
<keyword id="KW-1185">Reference proteome</keyword>
<keyword id="KW-0808">Transferase</keyword>
<proteinExistence type="inferred from homology"/>
<protein>
    <recommendedName>
        <fullName evidence="1">3-methyl-2-oxobutanoate hydroxymethyltransferase</fullName>
        <ecNumber evidence="1">2.1.2.11</ecNumber>
    </recommendedName>
    <alternativeName>
        <fullName evidence="1">Ketopantoate hydroxymethyltransferase</fullName>
        <shortName evidence="1">KPHMT</shortName>
    </alternativeName>
</protein>
<dbReference type="EC" id="2.1.2.11" evidence="1"/>
<dbReference type="EMBL" id="AE016828">
    <property type="protein sequence ID" value="AAO89976.1"/>
    <property type="molecule type" value="Genomic_DNA"/>
</dbReference>
<dbReference type="RefSeq" id="NP_819462.1">
    <property type="nucleotide sequence ID" value="NC_002971.4"/>
</dbReference>
<dbReference type="RefSeq" id="WP_010957565.1">
    <property type="nucleotide sequence ID" value="NC_002971.4"/>
</dbReference>
<dbReference type="SMR" id="Q83EA2"/>
<dbReference type="STRING" id="227377.CBU_0424"/>
<dbReference type="EnsemblBacteria" id="AAO89976">
    <property type="protein sequence ID" value="AAO89976"/>
    <property type="gene ID" value="CBU_0424"/>
</dbReference>
<dbReference type="GeneID" id="1208308"/>
<dbReference type="KEGG" id="cbu:CBU_0424"/>
<dbReference type="PATRIC" id="fig|227377.7.peg.413"/>
<dbReference type="eggNOG" id="COG0413">
    <property type="taxonomic scope" value="Bacteria"/>
</dbReference>
<dbReference type="HOGENOM" id="CLU_036645_1_0_6"/>
<dbReference type="OrthoDB" id="9781789at2"/>
<dbReference type="UniPathway" id="UPA00028">
    <property type="reaction ID" value="UER00003"/>
</dbReference>
<dbReference type="Proteomes" id="UP000002671">
    <property type="component" value="Chromosome"/>
</dbReference>
<dbReference type="GO" id="GO:0005737">
    <property type="term" value="C:cytoplasm"/>
    <property type="evidence" value="ECO:0000318"/>
    <property type="project" value="GO_Central"/>
</dbReference>
<dbReference type="GO" id="GO:0003864">
    <property type="term" value="F:3-methyl-2-oxobutanoate hydroxymethyltransferase activity"/>
    <property type="evidence" value="ECO:0000318"/>
    <property type="project" value="GO_Central"/>
</dbReference>
<dbReference type="GO" id="GO:0000287">
    <property type="term" value="F:magnesium ion binding"/>
    <property type="evidence" value="ECO:0000318"/>
    <property type="project" value="GO_Central"/>
</dbReference>
<dbReference type="GO" id="GO:0015940">
    <property type="term" value="P:pantothenate biosynthetic process"/>
    <property type="evidence" value="ECO:0000318"/>
    <property type="project" value="GO_Central"/>
</dbReference>
<dbReference type="CDD" id="cd06557">
    <property type="entry name" value="KPHMT-like"/>
    <property type="match status" value="1"/>
</dbReference>
<dbReference type="FunFam" id="3.20.20.60:FF:000078">
    <property type="entry name" value="3-methyl-2-oxobutanoate hydroxymethyltransferase"/>
    <property type="match status" value="1"/>
</dbReference>
<dbReference type="Gene3D" id="3.20.20.60">
    <property type="entry name" value="Phosphoenolpyruvate-binding domains"/>
    <property type="match status" value="1"/>
</dbReference>
<dbReference type="HAMAP" id="MF_00156">
    <property type="entry name" value="PanB"/>
    <property type="match status" value="1"/>
</dbReference>
<dbReference type="InterPro" id="IPR003700">
    <property type="entry name" value="Pantoate_hydroxy_MeTrfase"/>
</dbReference>
<dbReference type="InterPro" id="IPR015813">
    <property type="entry name" value="Pyrv/PenolPyrv_kinase-like_dom"/>
</dbReference>
<dbReference type="InterPro" id="IPR040442">
    <property type="entry name" value="Pyrv_kinase-like_dom_sf"/>
</dbReference>
<dbReference type="NCBIfam" id="TIGR00222">
    <property type="entry name" value="panB"/>
    <property type="match status" value="1"/>
</dbReference>
<dbReference type="NCBIfam" id="NF001452">
    <property type="entry name" value="PRK00311.1"/>
    <property type="match status" value="1"/>
</dbReference>
<dbReference type="PANTHER" id="PTHR20881">
    <property type="entry name" value="3-METHYL-2-OXOBUTANOATE HYDROXYMETHYLTRANSFERASE"/>
    <property type="match status" value="1"/>
</dbReference>
<dbReference type="PANTHER" id="PTHR20881:SF0">
    <property type="entry name" value="3-METHYL-2-OXOBUTANOATE HYDROXYMETHYLTRANSFERASE"/>
    <property type="match status" value="1"/>
</dbReference>
<dbReference type="Pfam" id="PF02548">
    <property type="entry name" value="Pantoate_transf"/>
    <property type="match status" value="1"/>
</dbReference>
<dbReference type="PIRSF" id="PIRSF000388">
    <property type="entry name" value="Pantoate_hydroxy_MeTrfase"/>
    <property type="match status" value="1"/>
</dbReference>
<dbReference type="SUPFAM" id="SSF51621">
    <property type="entry name" value="Phosphoenolpyruvate/pyruvate domain"/>
    <property type="match status" value="1"/>
</dbReference>
<gene>
    <name evidence="1" type="primary">panB</name>
    <name type="ordered locus">CBU_0424</name>
</gene>
<name>PANB_COXBU</name>
<sequence>MIAMNTPDFQRMKKDNKKISMVTCYDYWSACIISQSNVDCILVGDSLAMVMYGHSTTLPATVEIMAQHIQAVSRGAPNKFIIGDMPFCSYRKDLTTSMNAVERLMQAGAQAIKLEGADAHNLKFIHHVVKSGIPVIGHLGLTPQSIYTLGGFKVQGKEPSAAKKLMADAKALAETGCFAVVLECVPSELAELITHSISIPTIGIGAGPATSGQVLVLQDLLGTNNQFQPKYLKKFLNGFELIKKALDDFDQEVKTSTYPHLETHCY</sequence>